<organism>
    <name type="scientific">Paraburkholderia phymatum (strain DSM 17167 / CIP 108236 / LMG 21445 / STM815)</name>
    <name type="common">Burkholderia phymatum</name>
    <dbReference type="NCBI Taxonomy" id="391038"/>
    <lineage>
        <taxon>Bacteria</taxon>
        <taxon>Pseudomonadati</taxon>
        <taxon>Pseudomonadota</taxon>
        <taxon>Betaproteobacteria</taxon>
        <taxon>Burkholderiales</taxon>
        <taxon>Burkholderiaceae</taxon>
        <taxon>Paraburkholderia</taxon>
    </lineage>
</organism>
<keyword id="KW-0378">Hydrolase</keyword>
<keyword id="KW-1185">Reference proteome</keyword>
<feature type="chain" id="PRO_0000372025" description="GTP cyclohydrolase FolE2">
    <location>
        <begin position="1"/>
        <end position="268"/>
    </location>
</feature>
<feature type="site" description="May be catalytically important" evidence="1">
    <location>
        <position position="154"/>
    </location>
</feature>
<protein>
    <recommendedName>
        <fullName evidence="1">GTP cyclohydrolase FolE2</fullName>
        <ecNumber evidence="1">3.5.4.16</ecNumber>
    </recommendedName>
</protein>
<dbReference type="EC" id="3.5.4.16" evidence="1"/>
<dbReference type="EMBL" id="CP001044">
    <property type="protein sequence ID" value="ACC73070.1"/>
    <property type="molecule type" value="Genomic_DNA"/>
</dbReference>
<dbReference type="RefSeq" id="WP_012403243.1">
    <property type="nucleotide sequence ID" value="NC_010623.1"/>
</dbReference>
<dbReference type="SMR" id="B2JP67"/>
<dbReference type="STRING" id="391038.Bphy_3947"/>
<dbReference type="KEGG" id="bph:Bphy_3947"/>
<dbReference type="eggNOG" id="COG1469">
    <property type="taxonomic scope" value="Bacteria"/>
</dbReference>
<dbReference type="HOGENOM" id="CLU_062816_1_1_4"/>
<dbReference type="OrthoDB" id="9774824at2"/>
<dbReference type="UniPathway" id="UPA00848">
    <property type="reaction ID" value="UER00151"/>
</dbReference>
<dbReference type="Proteomes" id="UP000001192">
    <property type="component" value="Chromosome 2"/>
</dbReference>
<dbReference type="GO" id="GO:0003934">
    <property type="term" value="F:GTP cyclohydrolase I activity"/>
    <property type="evidence" value="ECO:0007669"/>
    <property type="project" value="UniProtKB-UniRule"/>
</dbReference>
<dbReference type="GO" id="GO:0046654">
    <property type="term" value="P:tetrahydrofolate biosynthetic process"/>
    <property type="evidence" value="ECO:0007669"/>
    <property type="project" value="UniProtKB-UniRule"/>
</dbReference>
<dbReference type="Gene3D" id="3.10.270.10">
    <property type="entry name" value="Urate Oxidase"/>
    <property type="match status" value="1"/>
</dbReference>
<dbReference type="HAMAP" id="MF_01527_B">
    <property type="entry name" value="GTP_cyclohydrol_B"/>
    <property type="match status" value="1"/>
</dbReference>
<dbReference type="InterPro" id="IPR022838">
    <property type="entry name" value="GTP_cyclohydrolase_FolE2"/>
</dbReference>
<dbReference type="InterPro" id="IPR003801">
    <property type="entry name" value="GTP_cyclohydrolase_FolE2/MptA"/>
</dbReference>
<dbReference type="NCBIfam" id="NF010200">
    <property type="entry name" value="PRK13674.1-1"/>
    <property type="match status" value="1"/>
</dbReference>
<dbReference type="PANTHER" id="PTHR36445">
    <property type="entry name" value="GTP CYCLOHYDROLASE MPTA"/>
    <property type="match status" value="1"/>
</dbReference>
<dbReference type="PANTHER" id="PTHR36445:SF1">
    <property type="entry name" value="GTP CYCLOHYDROLASE MPTA"/>
    <property type="match status" value="1"/>
</dbReference>
<dbReference type="Pfam" id="PF02649">
    <property type="entry name" value="GCHY-1"/>
    <property type="match status" value="1"/>
</dbReference>
<name>GCH4_PARP8</name>
<proteinExistence type="inferred from homology"/>
<gene>
    <name evidence="1" type="primary">folE2</name>
    <name type="ordered locus">Bphy_3947</name>
</gene>
<evidence type="ECO:0000255" key="1">
    <source>
        <dbReference type="HAMAP-Rule" id="MF_01527"/>
    </source>
</evidence>
<sequence length="268" mass="30032">MNQMNPAFVMPDVQSTVDTRQIPIQRVGVKAVRHPLTVRTPDGSAQPTVGTWNLDVHLPAEVKGTHMSRFVALLEENKAPLDSSAFRALLTSMLEKLEAPAGRIEVSFPYFVNKTAPVSGVQSLLDYEVSLMGDSRDGATRLFLKVLVPVTSLCPCSKKISQYGAHNQRSHVTINAELIDDVPVEDLIRIAEEEASCELWGLLKRPDEKFVTERAYENPKFVEDLVRDVAQRLNDDHRIVAYVLEAENFESIHNHSAYAVIESDKRLR</sequence>
<accession>B2JP67</accession>
<reference key="1">
    <citation type="journal article" date="2014" name="Stand. Genomic Sci.">
        <title>Complete genome sequence of Burkholderia phymatum STM815(T), a broad host range and efficient nitrogen-fixing symbiont of Mimosa species.</title>
        <authorList>
            <person name="Moulin L."/>
            <person name="Klonowska A."/>
            <person name="Caroline B."/>
            <person name="Booth K."/>
            <person name="Vriezen J.A."/>
            <person name="Melkonian R."/>
            <person name="James E.K."/>
            <person name="Young J.P."/>
            <person name="Bena G."/>
            <person name="Hauser L."/>
            <person name="Land M."/>
            <person name="Kyrpides N."/>
            <person name="Bruce D."/>
            <person name="Chain P."/>
            <person name="Copeland A."/>
            <person name="Pitluck S."/>
            <person name="Woyke T."/>
            <person name="Lizotte-Waniewski M."/>
            <person name="Bristow J."/>
            <person name="Riley M."/>
        </authorList>
    </citation>
    <scope>NUCLEOTIDE SEQUENCE [LARGE SCALE GENOMIC DNA]</scope>
    <source>
        <strain>DSM 17167 / CIP 108236 / LMG 21445 / STM815</strain>
    </source>
</reference>
<comment type="function">
    <text evidence="1">Converts GTP to 7,8-dihydroneopterin triphosphate.</text>
</comment>
<comment type="catalytic activity">
    <reaction evidence="1">
        <text>GTP + H2O = 7,8-dihydroneopterin 3'-triphosphate + formate + H(+)</text>
        <dbReference type="Rhea" id="RHEA:17473"/>
        <dbReference type="ChEBI" id="CHEBI:15377"/>
        <dbReference type="ChEBI" id="CHEBI:15378"/>
        <dbReference type="ChEBI" id="CHEBI:15740"/>
        <dbReference type="ChEBI" id="CHEBI:37565"/>
        <dbReference type="ChEBI" id="CHEBI:58462"/>
        <dbReference type="EC" id="3.5.4.16"/>
    </reaction>
</comment>
<comment type="pathway">
    <text evidence="1">Cofactor biosynthesis; 7,8-dihydroneopterin triphosphate biosynthesis; 7,8-dihydroneopterin triphosphate from GTP: step 1/1.</text>
</comment>
<comment type="similarity">
    <text evidence="1">Belongs to the GTP cyclohydrolase IV family.</text>
</comment>